<protein>
    <recommendedName>
        <fullName>Lysoplasmalogenase homolog</fullName>
    </recommendedName>
    <alternativeName>
        <fullName>Transmembrane protein 86 homolog</fullName>
    </alternativeName>
</protein>
<reference key="1">
    <citation type="journal article" date="2002" name="Nature">
        <title>Sequence and analysis of chromosome 2 of Dictyostelium discoideum.</title>
        <authorList>
            <person name="Gloeckner G."/>
            <person name="Eichinger L."/>
            <person name="Szafranski K."/>
            <person name="Pachebat J.A."/>
            <person name="Bankier A.T."/>
            <person name="Dear P.H."/>
            <person name="Lehmann R."/>
            <person name="Baumgart C."/>
            <person name="Parra G."/>
            <person name="Abril J.F."/>
            <person name="Guigo R."/>
            <person name="Kumpf K."/>
            <person name="Tunggal B."/>
            <person name="Cox E.C."/>
            <person name="Quail M.A."/>
            <person name="Platzer M."/>
            <person name="Rosenthal A."/>
            <person name="Noegel A.A."/>
        </authorList>
    </citation>
    <scope>NUCLEOTIDE SEQUENCE [LARGE SCALE GENOMIC DNA]</scope>
    <source>
        <strain>AX4</strain>
    </source>
</reference>
<reference key="2">
    <citation type="journal article" date="2005" name="Nature">
        <title>The genome of the social amoeba Dictyostelium discoideum.</title>
        <authorList>
            <person name="Eichinger L."/>
            <person name="Pachebat J.A."/>
            <person name="Gloeckner G."/>
            <person name="Rajandream M.A."/>
            <person name="Sucgang R."/>
            <person name="Berriman M."/>
            <person name="Song J."/>
            <person name="Olsen R."/>
            <person name="Szafranski K."/>
            <person name="Xu Q."/>
            <person name="Tunggal B."/>
            <person name="Kummerfeld S."/>
            <person name="Madera M."/>
            <person name="Konfortov B.A."/>
            <person name="Rivero F."/>
            <person name="Bankier A.T."/>
            <person name="Lehmann R."/>
            <person name="Hamlin N."/>
            <person name="Davies R."/>
            <person name="Gaudet P."/>
            <person name="Fey P."/>
            <person name="Pilcher K."/>
            <person name="Chen G."/>
            <person name="Saunders D."/>
            <person name="Sodergren E.J."/>
            <person name="Davis P."/>
            <person name="Kerhornou A."/>
            <person name="Nie X."/>
            <person name="Hall N."/>
            <person name="Anjard C."/>
            <person name="Hemphill L."/>
            <person name="Bason N."/>
            <person name="Farbrother P."/>
            <person name="Desany B."/>
            <person name="Just E."/>
            <person name="Morio T."/>
            <person name="Rost R."/>
            <person name="Churcher C.M."/>
            <person name="Cooper J."/>
            <person name="Haydock S."/>
            <person name="van Driessche N."/>
            <person name="Cronin A."/>
            <person name="Goodhead I."/>
            <person name="Muzny D.M."/>
            <person name="Mourier T."/>
            <person name="Pain A."/>
            <person name="Lu M."/>
            <person name="Harper D."/>
            <person name="Lindsay R."/>
            <person name="Hauser H."/>
            <person name="James K.D."/>
            <person name="Quiles M."/>
            <person name="Madan Babu M."/>
            <person name="Saito T."/>
            <person name="Buchrieser C."/>
            <person name="Wardroper A."/>
            <person name="Felder M."/>
            <person name="Thangavelu M."/>
            <person name="Johnson D."/>
            <person name="Knights A."/>
            <person name="Loulseged H."/>
            <person name="Mungall K.L."/>
            <person name="Oliver K."/>
            <person name="Price C."/>
            <person name="Quail M.A."/>
            <person name="Urushihara H."/>
            <person name="Hernandez J."/>
            <person name="Rabbinowitsch E."/>
            <person name="Steffen D."/>
            <person name="Sanders M."/>
            <person name="Ma J."/>
            <person name="Kohara Y."/>
            <person name="Sharp S."/>
            <person name="Simmonds M.N."/>
            <person name="Spiegler S."/>
            <person name="Tivey A."/>
            <person name="Sugano S."/>
            <person name="White B."/>
            <person name="Walker D."/>
            <person name="Woodward J.R."/>
            <person name="Winckler T."/>
            <person name="Tanaka Y."/>
            <person name="Shaulsky G."/>
            <person name="Schleicher M."/>
            <person name="Weinstock G.M."/>
            <person name="Rosenthal A."/>
            <person name="Cox E.C."/>
            <person name="Chisholm R.L."/>
            <person name="Gibbs R.A."/>
            <person name="Loomis W.F."/>
            <person name="Platzer M."/>
            <person name="Kay R.R."/>
            <person name="Williams J.G."/>
            <person name="Dear P.H."/>
            <person name="Noegel A.A."/>
            <person name="Barrell B.G."/>
            <person name="Kuspa A."/>
        </authorList>
    </citation>
    <scope>NUCLEOTIDE SEQUENCE [LARGE SCALE GENOMIC DNA]</scope>
    <source>
        <strain>AX4</strain>
    </source>
</reference>
<reference key="3">
    <citation type="journal article" date="2008" name="BMC Genomics">
        <title>Genome-wide transcriptional changes induced by phagocytosis or growth on bacteria in Dictyostelium.</title>
        <authorList>
            <person name="Sillo A."/>
            <person name="Bloomfield G."/>
            <person name="Balest A."/>
            <person name="Balbo A."/>
            <person name="Pergolizzi B."/>
            <person name="Peracino B."/>
            <person name="Skelton J."/>
            <person name="Ivens A."/>
            <person name="Bozzaro S."/>
        </authorList>
    </citation>
    <scope>INDUCTION [LARGE SCALE ANALYSIS]</scope>
</reference>
<reference key="4">
    <citation type="journal article" date="2008" name="BMC Microbiol.">
        <title>Dictyostelium transcriptional responses to Pseudomonas aeruginosa: common and specific effects from PAO1 and PA14 strains.</title>
        <authorList>
            <person name="Carilla-Latorre S."/>
            <person name="Calvo-Garrido J."/>
            <person name="Bloomfield G."/>
            <person name="Skelton J."/>
            <person name="Kay R.R."/>
            <person name="Ivens A."/>
            <person name="Martinez J.L."/>
            <person name="Escalante R."/>
        </authorList>
    </citation>
    <scope>INDUCTION [LARGE SCALE ANALYSIS]</scope>
</reference>
<keyword id="KW-0325">Glycoprotein</keyword>
<keyword id="KW-0472">Membrane</keyword>
<keyword id="KW-1185">Reference proteome</keyword>
<keyword id="KW-0812">Transmembrane</keyword>
<keyword id="KW-1133">Transmembrane helix</keyword>
<feature type="chain" id="PRO_0000363147" description="Lysoplasmalogenase homolog">
    <location>
        <begin position="1"/>
        <end position="303"/>
    </location>
</feature>
<feature type="transmembrane region" description="Helical" evidence="1">
    <location>
        <begin position="39"/>
        <end position="59"/>
    </location>
</feature>
<feature type="transmembrane region" description="Helical" evidence="1">
    <location>
        <begin position="69"/>
        <end position="89"/>
    </location>
</feature>
<feature type="transmembrane region" description="Helical" evidence="1">
    <location>
        <begin position="109"/>
        <end position="129"/>
    </location>
</feature>
<feature type="transmembrane region" description="Helical" evidence="1">
    <location>
        <begin position="132"/>
        <end position="152"/>
    </location>
</feature>
<feature type="transmembrane region" description="Helical" evidence="1">
    <location>
        <begin position="165"/>
        <end position="185"/>
    </location>
</feature>
<feature type="transmembrane region" description="Helical" evidence="1">
    <location>
        <begin position="194"/>
        <end position="214"/>
    </location>
</feature>
<feature type="transmembrane region" description="Helical" evidence="1">
    <location>
        <begin position="234"/>
        <end position="254"/>
    </location>
</feature>
<feature type="transmembrane region" description="Helical" evidence="1">
    <location>
        <begin position="278"/>
        <end position="298"/>
    </location>
</feature>
<feature type="glycosylation site" description="N-linked (GlcNAc...) asparagine" evidence="1">
    <location>
        <position position="62"/>
    </location>
</feature>
<accession>Q86H31</accession>
<accession>Q553A7</accession>
<name>TMM86_DICDI</name>
<proteinExistence type="evidence at transcript level"/>
<evidence type="ECO:0000255" key="1"/>
<evidence type="ECO:0000269" key="2">
    <source>
    </source>
</evidence>
<evidence type="ECO:0000269" key="3">
    <source>
    </source>
</evidence>
<evidence type="ECO:0000305" key="4"/>
<comment type="subcellular location">
    <subcellularLocation>
        <location evidence="4">Membrane</location>
        <topology evidence="4">Multi-pass membrane protein</topology>
    </subcellularLocation>
</comment>
<comment type="induction">
    <text evidence="2 3">Down-regulated by Pseudomonas aeruginosa, PAO1 strain, infection and by phagocytic stimuli but not by Pseudomonas aeruginosa, PA14 strain.</text>
</comment>
<comment type="similarity">
    <text evidence="4">Belongs to the TMEM86 family.</text>
</comment>
<gene>
    <name type="primary">tmem86</name>
    <name type="ORF">DDB_G0275665</name>
</gene>
<sequence>MEEPIIIDNNNIESLSQQQHSTVTNIDSNAGNVLYIDKDMWWKLLYTMFITTGIGYLMAKRNSTSKFRIIKPIPVVILGYIVLLWCSIHHKSGTQQMFNLIIPNNPTTYAMYISVGLFLSAVGDFFLLYKRFFIHGVFFFLVAHISFIFAFTSSEQFFTPTVTALLVGIVCLFVYMYLAKVFPLFSKMGISKSLAIALLFYTSVIVTMCFTASVKSFLKLITIINNNHDIFSNIFSSFSFYASIGAIGAVLFFISDLMILVREINQLANGQVSTIRKLLGHGDLGMIVYWLGQFCIALSVTEF</sequence>
<dbReference type="EMBL" id="AAFI02000013">
    <property type="protein sequence ID" value="EAL69583.1"/>
    <property type="molecule type" value="Genomic_DNA"/>
</dbReference>
<dbReference type="RefSeq" id="XP_643513.1">
    <property type="nucleotide sequence ID" value="XM_638421.1"/>
</dbReference>
<dbReference type="FunCoup" id="Q86H31">
    <property type="interactions" value="8"/>
</dbReference>
<dbReference type="GlyCosmos" id="Q86H31">
    <property type="glycosylation" value="1 site, No reported glycans"/>
</dbReference>
<dbReference type="GlyGen" id="Q86H31">
    <property type="glycosylation" value="1 site"/>
</dbReference>
<dbReference type="PaxDb" id="44689-DDB0302426"/>
<dbReference type="EnsemblProtists" id="EAL69583">
    <property type="protein sequence ID" value="EAL69583"/>
    <property type="gene ID" value="DDB_G0275665"/>
</dbReference>
<dbReference type="GeneID" id="8620094"/>
<dbReference type="KEGG" id="ddi:DDB_G0275665"/>
<dbReference type="dictyBase" id="DDB_G0275665"/>
<dbReference type="VEuPathDB" id="AmoebaDB:DDB_G0275665"/>
<dbReference type="eggNOG" id="ENOG502RE4P">
    <property type="taxonomic scope" value="Eukaryota"/>
</dbReference>
<dbReference type="HOGENOM" id="CLU_919591_0_0_1"/>
<dbReference type="InParanoid" id="Q86H31"/>
<dbReference type="OMA" id="WLGQFCI"/>
<dbReference type="PhylomeDB" id="Q86H31"/>
<dbReference type="Reactome" id="R-DDI-1482788">
    <property type="pathway name" value="Acyl chain remodelling of PC"/>
</dbReference>
<dbReference type="PRO" id="PR:Q86H31"/>
<dbReference type="Proteomes" id="UP000002195">
    <property type="component" value="Chromosome 2"/>
</dbReference>
<dbReference type="GO" id="GO:0016020">
    <property type="term" value="C:membrane"/>
    <property type="evidence" value="ECO:0000318"/>
    <property type="project" value="GO_Central"/>
</dbReference>
<dbReference type="GO" id="GO:0016787">
    <property type="term" value="F:hydrolase activity"/>
    <property type="evidence" value="ECO:0000318"/>
    <property type="project" value="GO_Central"/>
</dbReference>
<dbReference type="InterPro" id="IPR012506">
    <property type="entry name" value="TMEM86B-like"/>
</dbReference>
<dbReference type="PANTHER" id="PTHR31885">
    <property type="entry name" value="GH04784P"/>
    <property type="match status" value="1"/>
</dbReference>
<dbReference type="PANTHER" id="PTHR31885:SF6">
    <property type="entry name" value="GH04784P"/>
    <property type="match status" value="1"/>
</dbReference>
<dbReference type="Pfam" id="PF07947">
    <property type="entry name" value="YhhN"/>
    <property type="match status" value="1"/>
</dbReference>
<organism>
    <name type="scientific">Dictyostelium discoideum</name>
    <name type="common">Social amoeba</name>
    <dbReference type="NCBI Taxonomy" id="44689"/>
    <lineage>
        <taxon>Eukaryota</taxon>
        <taxon>Amoebozoa</taxon>
        <taxon>Evosea</taxon>
        <taxon>Eumycetozoa</taxon>
        <taxon>Dictyostelia</taxon>
        <taxon>Dictyosteliales</taxon>
        <taxon>Dictyosteliaceae</taxon>
        <taxon>Dictyostelium</taxon>
    </lineage>
</organism>